<evidence type="ECO:0000255" key="1">
    <source>
        <dbReference type="HAMAP-Rule" id="MF_01077"/>
    </source>
</evidence>
<organism>
    <name type="scientific">Acidithiobacillus ferrooxidans (strain ATCC 23270 / DSM 14882 / CIP 104768 / NCIMB 8455)</name>
    <name type="common">Ferrobacillus ferrooxidans (strain ATCC 23270)</name>
    <dbReference type="NCBI Taxonomy" id="243159"/>
    <lineage>
        <taxon>Bacteria</taxon>
        <taxon>Pseudomonadati</taxon>
        <taxon>Pseudomonadota</taxon>
        <taxon>Acidithiobacillia</taxon>
        <taxon>Acidithiobacillales</taxon>
        <taxon>Acidithiobacillaceae</taxon>
        <taxon>Acidithiobacillus</taxon>
    </lineage>
</organism>
<reference key="1">
    <citation type="journal article" date="2008" name="BMC Genomics">
        <title>Acidithiobacillus ferrooxidans metabolism: from genome sequence to industrial applications.</title>
        <authorList>
            <person name="Valdes J."/>
            <person name="Pedroso I."/>
            <person name="Quatrini R."/>
            <person name="Dodson R.J."/>
            <person name="Tettelin H."/>
            <person name="Blake R. II"/>
            <person name="Eisen J.A."/>
            <person name="Holmes D.S."/>
        </authorList>
    </citation>
    <scope>NUCLEOTIDE SEQUENCE [LARGE SCALE GENOMIC DNA]</scope>
    <source>
        <strain>ATCC 23270 / DSM 14882 / CIP 104768 / NCIMB 8455</strain>
    </source>
</reference>
<protein>
    <recommendedName>
        <fullName evidence="1">Ribosome maturation factor RimP</fullName>
    </recommendedName>
</protein>
<proteinExistence type="inferred from homology"/>
<keyword id="KW-0963">Cytoplasm</keyword>
<keyword id="KW-1185">Reference proteome</keyword>
<keyword id="KW-0690">Ribosome biogenesis</keyword>
<sequence length="150" mass="16885">MEDRLYEGIAQQAGIAGCTLVDARMVRTGRAVALQVFIEKDETTAVTIEDCAAVSRQLSLWLDVENPIHGAYRLEVSSPGLDRPLKNLHDFERFKGSQAEIHLHGLTQGRRRLQGELLGVEDQKIVLKNAEGRWTFALDDIHKARLVPQW</sequence>
<name>RIMP_ACIF2</name>
<comment type="function">
    <text evidence="1">Required for maturation of 30S ribosomal subunits.</text>
</comment>
<comment type="subcellular location">
    <subcellularLocation>
        <location evidence="1">Cytoplasm</location>
    </subcellularLocation>
</comment>
<comment type="similarity">
    <text evidence="1">Belongs to the RimP family.</text>
</comment>
<dbReference type="EMBL" id="CP001219">
    <property type="protein sequence ID" value="ACK78564.1"/>
    <property type="molecule type" value="Genomic_DNA"/>
</dbReference>
<dbReference type="SMR" id="B7J4D2"/>
<dbReference type="STRING" id="243159.AFE_0389"/>
<dbReference type="PaxDb" id="243159-AFE_0389"/>
<dbReference type="KEGG" id="afr:AFE_0389"/>
<dbReference type="eggNOG" id="COG0779">
    <property type="taxonomic scope" value="Bacteria"/>
</dbReference>
<dbReference type="HOGENOM" id="CLU_070525_0_1_6"/>
<dbReference type="Proteomes" id="UP000001362">
    <property type="component" value="Chromosome"/>
</dbReference>
<dbReference type="GO" id="GO:0005829">
    <property type="term" value="C:cytosol"/>
    <property type="evidence" value="ECO:0007669"/>
    <property type="project" value="TreeGrafter"/>
</dbReference>
<dbReference type="GO" id="GO:0000028">
    <property type="term" value="P:ribosomal small subunit assembly"/>
    <property type="evidence" value="ECO:0007669"/>
    <property type="project" value="TreeGrafter"/>
</dbReference>
<dbReference type="GO" id="GO:0006412">
    <property type="term" value="P:translation"/>
    <property type="evidence" value="ECO:0007669"/>
    <property type="project" value="TreeGrafter"/>
</dbReference>
<dbReference type="CDD" id="cd01734">
    <property type="entry name" value="YlxS_C"/>
    <property type="match status" value="1"/>
</dbReference>
<dbReference type="FunFam" id="3.30.300.70:FF:000001">
    <property type="entry name" value="Ribosome maturation factor RimP"/>
    <property type="match status" value="1"/>
</dbReference>
<dbReference type="Gene3D" id="2.30.30.180">
    <property type="entry name" value="Ribosome maturation factor RimP, C-terminal domain"/>
    <property type="match status" value="1"/>
</dbReference>
<dbReference type="Gene3D" id="3.30.300.70">
    <property type="entry name" value="RimP-like superfamily, N-terminal"/>
    <property type="match status" value="1"/>
</dbReference>
<dbReference type="HAMAP" id="MF_01077">
    <property type="entry name" value="RimP"/>
    <property type="match status" value="1"/>
</dbReference>
<dbReference type="InterPro" id="IPR003728">
    <property type="entry name" value="Ribosome_maturation_RimP"/>
</dbReference>
<dbReference type="InterPro" id="IPR028998">
    <property type="entry name" value="RimP_C"/>
</dbReference>
<dbReference type="InterPro" id="IPR036847">
    <property type="entry name" value="RimP_C_sf"/>
</dbReference>
<dbReference type="InterPro" id="IPR028989">
    <property type="entry name" value="RimP_N"/>
</dbReference>
<dbReference type="InterPro" id="IPR035956">
    <property type="entry name" value="RimP_N_sf"/>
</dbReference>
<dbReference type="PANTHER" id="PTHR33867">
    <property type="entry name" value="RIBOSOME MATURATION FACTOR RIMP"/>
    <property type="match status" value="1"/>
</dbReference>
<dbReference type="PANTHER" id="PTHR33867:SF1">
    <property type="entry name" value="RIBOSOME MATURATION FACTOR RIMP"/>
    <property type="match status" value="1"/>
</dbReference>
<dbReference type="Pfam" id="PF17384">
    <property type="entry name" value="DUF150_C"/>
    <property type="match status" value="1"/>
</dbReference>
<dbReference type="Pfam" id="PF02576">
    <property type="entry name" value="RimP_N"/>
    <property type="match status" value="1"/>
</dbReference>
<dbReference type="SUPFAM" id="SSF74942">
    <property type="entry name" value="YhbC-like, C-terminal domain"/>
    <property type="match status" value="1"/>
</dbReference>
<dbReference type="SUPFAM" id="SSF75420">
    <property type="entry name" value="YhbC-like, N-terminal domain"/>
    <property type="match status" value="1"/>
</dbReference>
<gene>
    <name evidence="1" type="primary">rimP</name>
    <name type="ordered locus">AFE_0389</name>
</gene>
<accession>B7J4D2</accession>
<feature type="chain" id="PRO_0000384585" description="Ribosome maturation factor RimP">
    <location>
        <begin position="1"/>
        <end position="150"/>
    </location>
</feature>